<proteinExistence type="inferred from homology"/>
<reference key="1">
    <citation type="journal article" date="2007" name="PLoS Genet.">
        <title>Patterns and implications of gene gain and loss in the evolution of Prochlorococcus.</title>
        <authorList>
            <person name="Kettler G.C."/>
            <person name="Martiny A.C."/>
            <person name="Huang K."/>
            <person name="Zucker J."/>
            <person name="Coleman M.L."/>
            <person name="Rodrigue S."/>
            <person name="Chen F."/>
            <person name="Lapidus A."/>
            <person name="Ferriera S."/>
            <person name="Johnson J."/>
            <person name="Steglich C."/>
            <person name="Church G.M."/>
            <person name="Richardson P."/>
            <person name="Chisholm S.W."/>
        </authorList>
    </citation>
    <scope>NUCLEOTIDE SEQUENCE [LARGE SCALE GENOMIC DNA]</scope>
    <source>
        <strain>MIT 9515</strain>
    </source>
</reference>
<name>SPEA_PROM5</name>
<organism>
    <name type="scientific">Prochlorococcus marinus (strain MIT 9515)</name>
    <dbReference type="NCBI Taxonomy" id="167542"/>
    <lineage>
        <taxon>Bacteria</taxon>
        <taxon>Bacillati</taxon>
        <taxon>Cyanobacteriota</taxon>
        <taxon>Cyanophyceae</taxon>
        <taxon>Synechococcales</taxon>
        <taxon>Prochlorococcaceae</taxon>
        <taxon>Prochlorococcus</taxon>
    </lineage>
</organism>
<dbReference type="EC" id="4.1.1.19" evidence="1"/>
<dbReference type="EMBL" id="CP000552">
    <property type="protein sequence ID" value="ABM71261.1"/>
    <property type="molecule type" value="Genomic_DNA"/>
</dbReference>
<dbReference type="RefSeq" id="WP_011819378.1">
    <property type="nucleotide sequence ID" value="NC_008817.1"/>
</dbReference>
<dbReference type="SMR" id="A2BU00"/>
<dbReference type="STRING" id="167542.P9515_00521"/>
<dbReference type="GeneID" id="60201060"/>
<dbReference type="KEGG" id="pmc:P9515_00521"/>
<dbReference type="eggNOG" id="COG1166">
    <property type="taxonomic scope" value="Bacteria"/>
</dbReference>
<dbReference type="HOGENOM" id="CLU_027243_1_0_3"/>
<dbReference type="OrthoDB" id="9802658at2"/>
<dbReference type="UniPathway" id="UPA00186">
    <property type="reaction ID" value="UER00284"/>
</dbReference>
<dbReference type="Proteomes" id="UP000001589">
    <property type="component" value="Chromosome"/>
</dbReference>
<dbReference type="GO" id="GO:0008792">
    <property type="term" value="F:arginine decarboxylase activity"/>
    <property type="evidence" value="ECO:0007669"/>
    <property type="project" value="UniProtKB-UniRule"/>
</dbReference>
<dbReference type="GO" id="GO:0046872">
    <property type="term" value="F:metal ion binding"/>
    <property type="evidence" value="ECO:0007669"/>
    <property type="project" value="UniProtKB-KW"/>
</dbReference>
<dbReference type="GO" id="GO:0006527">
    <property type="term" value="P:arginine catabolic process"/>
    <property type="evidence" value="ECO:0007669"/>
    <property type="project" value="InterPro"/>
</dbReference>
<dbReference type="GO" id="GO:0008295">
    <property type="term" value="P:spermidine biosynthetic process"/>
    <property type="evidence" value="ECO:0007669"/>
    <property type="project" value="UniProtKB-UniRule"/>
</dbReference>
<dbReference type="CDD" id="cd06830">
    <property type="entry name" value="PLPDE_III_ADC"/>
    <property type="match status" value="1"/>
</dbReference>
<dbReference type="Gene3D" id="1.20.58.930">
    <property type="match status" value="1"/>
</dbReference>
<dbReference type="Gene3D" id="3.20.20.10">
    <property type="entry name" value="Alanine racemase"/>
    <property type="match status" value="1"/>
</dbReference>
<dbReference type="Gene3D" id="2.40.37.10">
    <property type="entry name" value="Lyase, Ornithine Decarboxylase, Chain A, domain 1"/>
    <property type="match status" value="1"/>
</dbReference>
<dbReference type="HAMAP" id="MF_01417">
    <property type="entry name" value="SpeA"/>
    <property type="match status" value="1"/>
</dbReference>
<dbReference type="InterPro" id="IPR009006">
    <property type="entry name" value="Ala_racemase/Decarboxylase_C"/>
</dbReference>
<dbReference type="InterPro" id="IPR040634">
    <property type="entry name" value="Arg_decarb_HB"/>
</dbReference>
<dbReference type="InterPro" id="IPR002985">
    <property type="entry name" value="Arg_decrbxlase"/>
</dbReference>
<dbReference type="InterPro" id="IPR022657">
    <property type="entry name" value="De-COase2_CS"/>
</dbReference>
<dbReference type="InterPro" id="IPR022644">
    <property type="entry name" value="De-COase2_N"/>
</dbReference>
<dbReference type="InterPro" id="IPR022653">
    <property type="entry name" value="De-COase2_pyr-phos_BS"/>
</dbReference>
<dbReference type="InterPro" id="IPR000183">
    <property type="entry name" value="Orn/DAP/Arg_de-COase"/>
</dbReference>
<dbReference type="InterPro" id="IPR029066">
    <property type="entry name" value="PLP-binding_barrel"/>
</dbReference>
<dbReference type="NCBIfam" id="NF003763">
    <property type="entry name" value="PRK05354.1"/>
    <property type="match status" value="1"/>
</dbReference>
<dbReference type="NCBIfam" id="TIGR01273">
    <property type="entry name" value="speA"/>
    <property type="match status" value="1"/>
</dbReference>
<dbReference type="PANTHER" id="PTHR43295">
    <property type="entry name" value="ARGININE DECARBOXYLASE"/>
    <property type="match status" value="1"/>
</dbReference>
<dbReference type="PANTHER" id="PTHR43295:SF9">
    <property type="entry name" value="BIOSYNTHETIC ARGININE DECARBOXYLASE"/>
    <property type="match status" value="1"/>
</dbReference>
<dbReference type="Pfam" id="PF17810">
    <property type="entry name" value="Arg_decarb_HB"/>
    <property type="match status" value="1"/>
</dbReference>
<dbReference type="Pfam" id="PF02784">
    <property type="entry name" value="Orn_Arg_deC_N"/>
    <property type="match status" value="1"/>
</dbReference>
<dbReference type="PIRSF" id="PIRSF001336">
    <property type="entry name" value="Arg_decrbxlase"/>
    <property type="match status" value="1"/>
</dbReference>
<dbReference type="PRINTS" id="PR01180">
    <property type="entry name" value="ARGDCRBXLASE"/>
</dbReference>
<dbReference type="PRINTS" id="PR01179">
    <property type="entry name" value="ODADCRBXLASE"/>
</dbReference>
<dbReference type="SUPFAM" id="SSF50621">
    <property type="entry name" value="Alanine racemase C-terminal domain-like"/>
    <property type="match status" value="1"/>
</dbReference>
<dbReference type="SUPFAM" id="SSF51419">
    <property type="entry name" value="PLP-binding barrel"/>
    <property type="match status" value="1"/>
</dbReference>
<dbReference type="PROSITE" id="PS00878">
    <property type="entry name" value="ODR_DC_2_1"/>
    <property type="match status" value="1"/>
</dbReference>
<dbReference type="PROSITE" id="PS00879">
    <property type="entry name" value="ODR_DC_2_2"/>
    <property type="match status" value="1"/>
</dbReference>
<keyword id="KW-0210">Decarboxylase</keyword>
<keyword id="KW-0456">Lyase</keyword>
<keyword id="KW-0460">Magnesium</keyword>
<keyword id="KW-0479">Metal-binding</keyword>
<keyword id="KW-0620">Polyamine biosynthesis</keyword>
<keyword id="KW-0663">Pyridoxal phosphate</keyword>
<keyword id="KW-0745">Spermidine biosynthesis</keyword>
<sequence>MTNFDSKKLNKHWTIEDSISTYGIDKWGDQYFSINSLGNISITPNRNSKKTIDLFKLVNEIKSREINTPLILRFNDILKDRITELNNAFSQAIETYNYKNIFQGVFPIKCNQQKNVLEKIIEYGDYWDFGLEVGSKSELLIGLSLLENKKSLLICNGYKDKKYIEIAILARKLGKQPIIVIEQIDEVQRIIEAVKNLRSTPILGIRSKLSSKSSGRWGKSVGDNSKFGLSIPEIMLTIKELKEASLINEMKLLHFHIGSQISDISVIKDALQEASQIFVELSKLGAPMKYIDVGGGLGIDFDGTKTSSNTSTNYSLQNYANDVVATIKDSCEVNNIQHPIIISESGRAIVSHCSVLIFDVLGTSHVSSQIKVSHQKKTSLIIKNLIDTHNQLKNLRNKKEDLSEIIELWNDAKKFKKDCLVAFRLGFISLGERAYAEELTWACAKEISSHLDNEKIIHPDLSEITETLSSTYYANLSVFKSIPDTWAINQIFPIIPIHRHLEEPICKGNFADLTCDSDGKLNNFIDNGKIKSLLNLHRPEENNDYLIGIFMAGAYQEALGNFHNLFGNTNVIHIDINEDNTYKIKNIIKENSKSEILELLDYSSDNLVESIRINTEFAINNKTLSIEEARKLIDQIETSLRKSSYLSE</sequence>
<comment type="function">
    <text evidence="1">Catalyzes the biosynthesis of agmatine from arginine.</text>
</comment>
<comment type="catalytic activity">
    <reaction evidence="1">
        <text>L-arginine + H(+) = agmatine + CO2</text>
        <dbReference type="Rhea" id="RHEA:17641"/>
        <dbReference type="ChEBI" id="CHEBI:15378"/>
        <dbReference type="ChEBI" id="CHEBI:16526"/>
        <dbReference type="ChEBI" id="CHEBI:32682"/>
        <dbReference type="ChEBI" id="CHEBI:58145"/>
        <dbReference type="EC" id="4.1.1.19"/>
    </reaction>
</comment>
<comment type="cofactor">
    <cofactor evidence="1">
        <name>Mg(2+)</name>
        <dbReference type="ChEBI" id="CHEBI:18420"/>
    </cofactor>
</comment>
<comment type="cofactor">
    <cofactor evidence="1">
        <name>pyridoxal 5'-phosphate</name>
        <dbReference type="ChEBI" id="CHEBI:597326"/>
    </cofactor>
</comment>
<comment type="pathway">
    <text evidence="1">Amine and polyamine biosynthesis; agmatine biosynthesis; agmatine from L-arginine: step 1/1.</text>
</comment>
<comment type="similarity">
    <text evidence="1">Belongs to the Orn/Lys/Arg decarboxylase class-II family. SpeA subfamily.</text>
</comment>
<accession>A2BU00</accession>
<evidence type="ECO:0000255" key="1">
    <source>
        <dbReference type="HAMAP-Rule" id="MF_01417"/>
    </source>
</evidence>
<gene>
    <name evidence="1" type="primary">speA</name>
    <name type="ordered locus">P9515_00521</name>
</gene>
<feature type="chain" id="PRO_1000024260" description="Biosynthetic arginine decarboxylase">
    <location>
        <begin position="1"/>
        <end position="648"/>
    </location>
</feature>
<feature type="binding site" evidence="1">
    <location>
        <begin position="291"/>
        <end position="301"/>
    </location>
    <ligand>
        <name>substrate</name>
    </ligand>
</feature>
<feature type="modified residue" description="N6-(pyridoxal phosphate)lysine" evidence="1">
    <location>
        <position position="109"/>
    </location>
</feature>
<protein>
    <recommendedName>
        <fullName evidence="1">Biosynthetic arginine decarboxylase</fullName>
        <shortName evidence="1">ADC</shortName>
        <ecNumber evidence="1">4.1.1.19</ecNumber>
    </recommendedName>
</protein>